<organism>
    <name type="scientific">Xenopus laevis</name>
    <name type="common">African clawed frog</name>
    <dbReference type="NCBI Taxonomy" id="8355"/>
    <lineage>
        <taxon>Eukaryota</taxon>
        <taxon>Metazoa</taxon>
        <taxon>Chordata</taxon>
        <taxon>Craniata</taxon>
        <taxon>Vertebrata</taxon>
        <taxon>Euteleostomi</taxon>
        <taxon>Amphibia</taxon>
        <taxon>Batrachia</taxon>
        <taxon>Anura</taxon>
        <taxon>Pipoidea</taxon>
        <taxon>Pipidae</taxon>
        <taxon>Xenopodinae</taxon>
        <taxon>Xenopus</taxon>
        <taxon>Xenopus</taxon>
    </lineage>
</organism>
<sequence length="345" mass="38484">MSRWSVSQGCGNSHKALRMSGNREQLLSGWGAPGMLRPSMRSEAERQRSFRAWPRSCPQLSPVELARSGFYYLGPGDRVQCFSCGGVLRSWEPGDRPDTEHRKFFPSCPFLQQQQRGPGATDSVDGQVLGQLSGEEPDRTWEPVYPEMSEEQVRLGSFSTWPLDVPGSPEVLAGAGFFYTGHRDHVKCFHCDGGLQNWEQGDDPWTEHAKWFPMCDFLLQVKGEAFIRSVQESLFSSPEPSPESLGSYDYDRSLASSTESVSVPRAPTPGERSEPPKVSGPPLSTEEQLQRLKEERMCKVCMDKDVSMLFVPCGHLVVCTECAPNLRHCPICRAAIRGSVRAFMS</sequence>
<proteinExistence type="evidence at transcript level"/>
<gene>
    <name type="primary">birc7-b</name>
</gene>
<feature type="chain" id="PRO_0000379960" description="Baculoviral IAP repeat-containing protein 7-B">
    <location>
        <begin position="1"/>
        <end position="345"/>
    </location>
</feature>
<feature type="repeat" description="BIR 1" evidence="5">
    <location>
        <begin position="46"/>
        <end position="112"/>
    </location>
</feature>
<feature type="repeat" description="BIR 2" evidence="5">
    <location>
        <begin position="154"/>
        <end position="219"/>
    </location>
</feature>
<feature type="zinc finger region" description="RING-type" evidence="7">
    <location>
        <begin position="298"/>
        <end position="333"/>
    </location>
</feature>
<feature type="region of interest" description="Disordered" evidence="8">
    <location>
        <begin position="258"/>
        <end position="286"/>
    </location>
</feature>
<feature type="binding site" evidence="2 6">
    <location>
        <position position="188"/>
    </location>
    <ligand>
        <name>Zn(2+)</name>
        <dbReference type="ChEBI" id="CHEBI:29105"/>
    </ligand>
</feature>
<feature type="binding site" evidence="2 6">
    <location>
        <position position="191"/>
    </location>
    <ligand>
        <name>Zn(2+)</name>
        <dbReference type="ChEBI" id="CHEBI:29105"/>
    </ligand>
</feature>
<feature type="binding site" evidence="2 6">
    <location>
        <position position="208"/>
    </location>
    <ligand>
        <name>Zn(2+)</name>
        <dbReference type="ChEBI" id="CHEBI:29105"/>
    </ligand>
</feature>
<feature type="binding site" evidence="2 6">
    <location>
        <position position="215"/>
    </location>
    <ligand>
        <name>Zn(2+)</name>
        <dbReference type="ChEBI" id="CHEBI:29105"/>
    </ligand>
</feature>
<feature type="modified residue" description="Phosphoserine" evidence="4">
    <location>
        <position position="237"/>
    </location>
</feature>
<feature type="modified residue" description="Phosphoserine; by MAPK1" evidence="1">
    <location>
        <position position="241"/>
    </location>
</feature>
<feature type="modified residue" description="Phosphoserine" evidence="4">
    <location>
        <position position="253"/>
    </location>
</feature>
<feature type="modified residue" description="Phosphoserine; by MAPK1" evidence="1">
    <location>
        <position position="257"/>
    </location>
</feature>
<evidence type="ECO:0000250" key="1"/>
<evidence type="ECO:0000250" key="2">
    <source>
        <dbReference type="UniProtKB" id="O15392"/>
    </source>
</evidence>
<evidence type="ECO:0000250" key="3">
    <source>
        <dbReference type="UniProtKB" id="P98170"/>
    </source>
</evidence>
<evidence type="ECO:0000250" key="4">
    <source>
        <dbReference type="UniProtKB" id="Q8JHV9"/>
    </source>
</evidence>
<evidence type="ECO:0000255" key="5"/>
<evidence type="ECO:0000255" key="6">
    <source>
        <dbReference type="PROSITE-ProRule" id="PRU00029"/>
    </source>
</evidence>
<evidence type="ECO:0000255" key="7">
    <source>
        <dbReference type="PROSITE-ProRule" id="PRU00175"/>
    </source>
</evidence>
<evidence type="ECO:0000256" key="8">
    <source>
        <dbReference type="SAM" id="MobiDB-lite"/>
    </source>
</evidence>
<evidence type="ECO:0000305" key="9"/>
<evidence type="ECO:0000312" key="10">
    <source>
        <dbReference type="EMBL" id="AAI57459.1"/>
    </source>
</evidence>
<accession>A9ULZ2</accession>
<dbReference type="EC" id="2.3.2.27" evidence="4"/>
<dbReference type="EMBL" id="BC157458">
    <property type="protein sequence ID" value="AAI57459.1"/>
    <property type="status" value="ALT_INIT"/>
    <property type="molecule type" value="mRNA"/>
</dbReference>
<dbReference type="SMR" id="A9ULZ2"/>
<dbReference type="Proteomes" id="UP000186698">
    <property type="component" value="Unplaced"/>
</dbReference>
<dbReference type="GO" id="GO:0005737">
    <property type="term" value="C:cytoplasm"/>
    <property type="evidence" value="ECO:0000250"/>
    <property type="project" value="UniProtKB"/>
</dbReference>
<dbReference type="GO" id="GO:0005634">
    <property type="term" value="C:nucleus"/>
    <property type="evidence" value="ECO:0000318"/>
    <property type="project" value="GO_Central"/>
</dbReference>
<dbReference type="GO" id="GO:0004869">
    <property type="term" value="F:cysteine-type endopeptidase inhibitor activity"/>
    <property type="evidence" value="ECO:0000250"/>
    <property type="project" value="UniProtKB"/>
</dbReference>
<dbReference type="GO" id="GO:0043027">
    <property type="term" value="F:cysteine-type endopeptidase inhibitor activity involved in apoptotic process"/>
    <property type="evidence" value="ECO:0000318"/>
    <property type="project" value="GO_Central"/>
</dbReference>
<dbReference type="GO" id="GO:0061630">
    <property type="term" value="F:ubiquitin protein ligase activity"/>
    <property type="evidence" value="ECO:0000318"/>
    <property type="project" value="GO_Central"/>
</dbReference>
<dbReference type="GO" id="GO:0008270">
    <property type="term" value="F:zinc ion binding"/>
    <property type="evidence" value="ECO:0007669"/>
    <property type="project" value="UniProtKB-KW"/>
</dbReference>
<dbReference type="GO" id="GO:0006915">
    <property type="term" value="P:apoptotic process"/>
    <property type="evidence" value="ECO:0007669"/>
    <property type="project" value="UniProtKB-KW"/>
</dbReference>
<dbReference type="GO" id="GO:0043066">
    <property type="term" value="P:negative regulation of apoptotic process"/>
    <property type="evidence" value="ECO:0000250"/>
    <property type="project" value="UniProtKB"/>
</dbReference>
<dbReference type="GO" id="GO:0031398">
    <property type="term" value="P:positive regulation of protein ubiquitination"/>
    <property type="evidence" value="ECO:0000318"/>
    <property type="project" value="GO_Central"/>
</dbReference>
<dbReference type="GO" id="GO:0051865">
    <property type="term" value="P:protein autoubiquitination"/>
    <property type="evidence" value="ECO:0000250"/>
    <property type="project" value="UniProtKB"/>
</dbReference>
<dbReference type="GO" id="GO:0051726">
    <property type="term" value="P:regulation of cell cycle"/>
    <property type="evidence" value="ECO:0000318"/>
    <property type="project" value="GO_Central"/>
</dbReference>
<dbReference type="CDD" id="cd00022">
    <property type="entry name" value="BIR"/>
    <property type="match status" value="2"/>
</dbReference>
<dbReference type="CDD" id="cd16713">
    <property type="entry name" value="RING-HC_BIRC2_3_7"/>
    <property type="match status" value="1"/>
</dbReference>
<dbReference type="FunFam" id="3.30.40.10:FF:000184">
    <property type="entry name" value="Baculoviral IAP repeat containing 2"/>
    <property type="match status" value="1"/>
</dbReference>
<dbReference type="FunFam" id="1.10.1170.10:FF:000002">
    <property type="entry name" value="Baculoviral IAP repeat containing 7"/>
    <property type="match status" value="1"/>
</dbReference>
<dbReference type="FunFam" id="1.10.533.10:FF:000075">
    <property type="entry name" value="Baculoviral IAP repeat containing 7"/>
    <property type="match status" value="1"/>
</dbReference>
<dbReference type="FunFam" id="1.10.1170.10:FF:000023">
    <property type="entry name" value="Baculoviral IAP repeat-containing protein 7"/>
    <property type="match status" value="1"/>
</dbReference>
<dbReference type="FunFam" id="1.10.1170.10:FF:000003">
    <property type="entry name" value="E3 ubiquitin-protein ligase XIAP"/>
    <property type="match status" value="1"/>
</dbReference>
<dbReference type="Gene3D" id="1.10.1170.10">
    <property type="entry name" value="Inhibitor Of Apoptosis Protein (2mihbC-IAP-1), Chain A"/>
    <property type="match status" value="2"/>
</dbReference>
<dbReference type="Gene3D" id="3.30.40.10">
    <property type="entry name" value="Zinc/RING finger domain, C3HC4 (zinc finger)"/>
    <property type="match status" value="1"/>
</dbReference>
<dbReference type="InterPro" id="IPR001370">
    <property type="entry name" value="BIR_rpt"/>
</dbReference>
<dbReference type="InterPro" id="IPR050784">
    <property type="entry name" value="IAP"/>
</dbReference>
<dbReference type="InterPro" id="IPR001841">
    <property type="entry name" value="Znf_RING"/>
</dbReference>
<dbReference type="InterPro" id="IPR013083">
    <property type="entry name" value="Znf_RING/FYVE/PHD"/>
</dbReference>
<dbReference type="PANTHER" id="PTHR10044:SF163">
    <property type="entry name" value="BACULOVIRAL IAP REPEAT-CONTAINING PROTEIN 7"/>
    <property type="match status" value="1"/>
</dbReference>
<dbReference type="PANTHER" id="PTHR10044">
    <property type="entry name" value="INHIBITOR OF APOPTOSIS"/>
    <property type="match status" value="1"/>
</dbReference>
<dbReference type="Pfam" id="PF00653">
    <property type="entry name" value="BIR"/>
    <property type="match status" value="2"/>
</dbReference>
<dbReference type="Pfam" id="PF13920">
    <property type="entry name" value="zf-C3HC4_3"/>
    <property type="match status" value="1"/>
</dbReference>
<dbReference type="SMART" id="SM00238">
    <property type="entry name" value="BIR"/>
    <property type="match status" value="2"/>
</dbReference>
<dbReference type="SMART" id="SM00184">
    <property type="entry name" value="RING"/>
    <property type="match status" value="1"/>
</dbReference>
<dbReference type="SUPFAM" id="SSF57924">
    <property type="entry name" value="Inhibitor of apoptosis (IAP) repeat"/>
    <property type="match status" value="2"/>
</dbReference>
<dbReference type="PROSITE" id="PS01282">
    <property type="entry name" value="BIR_REPEAT_1"/>
    <property type="match status" value="2"/>
</dbReference>
<dbReference type="PROSITE" id="PS50143">
    <property type="entry name" value="BIR_REPEAT_2"/>
    <property type="match status" value="2"/>
</dbReference>
<dbReference type="PROSITE" id="PS50089">
    <property type="entry name" value="ZF_RING_2"/>
    <property type="match status" value="1"/>
</dbReference>
<protein>
    <recommendedName>
        <fullName>Baculoviral IAP repeat-containing protein 7-B</fullName>
        <ecNumber evidence="4">2.3.2.27</ecNumber>
    </recommendedName>
    <alternativeName>
        <fullName>E3 ubiquitin-protein ligase EIAP-B</fullName>
    </alternativeName>
    <alternativeName>
        <fullName>Embryonic/Egg IAP-B</fullName>
        <shortName>EIAP/XLX-B</shortName>
    </alternativeName>
    <alternativeName>
        <fullName evidence="9">RING-type E3 ubiquitin transferase EIAP-B</fullName>
    </alternativeName>
</protein>
<reference key="1">
    <citation type="submission" date="2007-12" db="EMBL/GenBank/DDBJ databases">
        <authorList>
            <consortium name="NIH - Xenopus Gene Collection (XGC) project"/>
        </authorList>
    </citation>
    <scope>NUCLEOTIDE SEQUENCE [LARGE SCALE MRNA]</scope>
    <source>
        <tissue evidence="10">Ovary</tissue>
    </source>
</reference>
<keyword id="KW-0053">Apoptosis</keyword>
<keyword id="KW-0963">Cytoplasm</keyword>
<keyword id="KW-0217">Developmental protein</keyword>
<keyword id="KW-0479">Metal-binding</keyword>
<keyword id="KW-0597">Phosphoprotein</keyword>
<keyword id="KW-0646">Protease inhibitor</keyword>
<keyword id="KW-1185">Reference proteome</keyword>
<keyword id="KW-0677">Repeat</keyword>
<keyword id="KW-0789">Thiol protease inhibitor</keyword>
<keyword id="KW-0808">Transferase</keyword>
<keyword id="KW-0832">Ubl conjugation</keyword>
<keyword id="KW-0833">Ubl conjugation pathway</keyword>
<keyword id="KW-0862">Zinc</keyword>
<keyword id="KW-0863">Zinc-finger</keyword>
<name>BIR7B_XENLA</name>
<comment type="function">
    <text evidence="4">Weak apoptotic suppressor. Has E3 ubiquitin-protein ligase activity. Weak inhibitor of caspase activity.</text>
</comment>
<comment type="catalytic activity">
    <reaction evidence="4">
        <text>S-ubiquitinyl-[E2 ubiquitin-conjugating enzyme]-L-cysteine + [acceptor protein]-L-lysine = [E2 ubiquitin-conjugating enzyme]-L-cysteine + N(6)-ubiquitinyl-[acceptor protein]-L-lysine.</text>
        <dbReference type="EC" id="2.3.2.27"/>
    </reaction>
</comment>
<comment type="subcellular location">
    <subcellularLocation>
        <location evidence="3">Cytoplasm</location>
    </subcellularLocation>
</comment>
<comment type="domain">
    <text evidence="4">The BIR2 domain is required for caspase-inhibition.</text>
</comment>
<comment type="domain">
    <text evidence="4">The C-terminal region containing the RING finger domain is required for the initial degradation step, and the final digestion of cleavage fragments.</text>
</comment>
<comment type="PTM">
    <text evidence="4">Auto-ubiquitinated, and degraded in a 2-step mechanism; a caspase-independent first step and a caspase-dependent second step.</text>
</comment>
<comment type="PTM">
    <text evidence="4">Phosphorylated via MAPK-dependent and CDK-dependent pathways during oocyte maturation. Phosphorylation does not appear to affect caspase inhibition or autoubiquitination activity.</text>
</comment>
<comment type="similarity">
    <text evidence="5">Belongs to the IAP family.</text>
</comment>
<comment type="sequence caution" evidence="9">
    <conflict type="erroneous initiation">
        <sequence resource="EMBL-CDS" id="AAI57459"/>
    </conflict>
</comment>